<reference key="1">
    <citation type="journal article" date="2008" name="PLoS ONE">
        <title>Genetic basis of virulence attenuation revealed by comparative genomic analysis of Mycobacterium tuberculosis strain H37Ra versus H37Rv.</title>
        <authorList>
            <person name="Zheng H."/>
            <person name="Lu L."/>
            <person name="Wang B."/>
            <person name="Pu S."/>
            <person name="Zhang X."/>
            <person name="Zhu G."/>
            <person name="Shi W."/>
            <person name="Zhang L."/>
            <person name="Wang H."/>
            <person name="Wang S."/>
            <person name="Zhao G."/>
            <person name="Zhang Y."/>
        </authorList>
    </citation>
    <scope>NUCLEOTIDE SEQUENCE [LARGE SCALE GENOMIC DNA]</scope>
    <source>
        <strain>ATCC 25177 / H37Ra</strain>
    </source>
</reference>
<protein>
    <recommendedName>
        <fullName evidence="1">Histidinol-phosphate aminotransferase</fullName>
        <ecNumber evidence="1">2.6.1.9</ecNumber>
    </recommendedName>
    <alternativeName>
        <fullName evidence="1">Imidazole acetol-phosphate transaminase</fullName>
    </alternativeName>
</protein>
<evidence type="ECO:0000255" key="1">
    <source>
        <dbReference type="HAMAP-Rule" id="MF_01023"/>
    </source>
</evidence>
<organism>
    <name type="scientific">Mycobacterium tuberculosis (strain ATCC 25177 / H37Ra)</name>
    <dbReference type="NCBI Taxonomy" id="419947"/>
    <lineage>
        <taxon>Bacteria</taxon>
        <taxon>Bacillati</taxon>
        <taxon>Actinomycetota</taxon>
        <taxon>Actinomycetes</taxon>
        <taxon>Mycobacteriales</taxon>
        <taxon>Mycobacteriaceae</taxon>
        <taxon>Mycobacterium</taxon>
        <taxon>Mycobacterium tuberculosis complex</taxon>
    </lineage>
</organism>
<proteinExistence type="inferred from homology"/>
<accession>A5U2V6</accession>
<dbReference type="EC" id="2.6.1.9" evidence="1"/>
<dbReference type="EMBL" id="CP000611">
    <property type="protein sequence ID" value="ABQ73356.1"/>
    <property type="molecule type" value="Genomic_DNA"/>
</dbReference>
<dbReference type="RefSeq" id="WP_003407947.1">
    <property type="nucleotide sequence ID" value="NZ_CP016972.1"/>
</dbReference>
<dbReference type="SMR" id="A5U2V6"/>
<dbReference type="KEGG" id="mra:MRA_1610"/>
<dbReference type="eggNOG" id="COG0079">
    <property type="taxonomic scope" value="Bacteria"/>
</dbReference>
<dbReference type="HOGENOM" id="CLU_017584_3_1_11"/>
<dbReference type="UniPathway" id="UPA00031">
    <property type="reaction ID" value="UER00012"/>
</dbReference>
<dbReference type="Proteomes" id="UP000001988">
    <property type="component" value="Chromosome"/>
</dbReference>
<dbReference type="GO" id="GO:0004400">
    <property type="term" value="F:histidinol-phosphate transaminase activity"/>
    <property type="evidence" value="ECO:0007669"/>
    <property type="project" value="UniProtKB-UniRule"/>
</dbReference>
<dbReference type="GO" id="GO:0030170">
    <property type="term" value="F:pyridoxal phosphate binding"/>
    <property type="evidence" value="ECO:0007669"/>
    <property type="project" value="InterPro"/>
</dbReference>
<dbReference type="GO" id="GO:0000105">
    <property type="term" value="P:L-histidine biosynthetic process"/>
    <property type="evidence" value="ECO:0007669"/>
    <property type="project" value="UniProtKB-UniRule"/>
</dbReference>
<dbReference type="CDD" id="cd00609">
    <property type="entry name" value="AAT_like"/>
    <property type="match status" value="1"/>
</dbReference>
<dbReference type="FunFam" id="3.40.640.10:FF:000138">
    <property type="entry name" value="Histidinol-phosphate aminotransferase"/>
    <property type="match status" value="1"/>
</dbReference>
<dbReference type="Gene3D" id="3.90.1150.10">
    <property type="entry name" value="Aspartate Aminotransferase, domain 1"/>
    <property type="match status" value="1"/>
</dbReference>
<dbReference type="Gene3D" id="3.40.640.10">
    <property type="entry name" value="Type I PLP-dependent aspartate aminotransferase-like (Major domain)"/>
    <property type="match status" value="1"/>
</dbReference>
<dbReference type="HAMAP" id="MF_01023">
    <property type="entry name" value="HisC_aminotrans_2"/>
    <property type="match status" value="1"/>
</dbReference>
<dbReference type="InterPro" id="IPR001917">
    <property type="entry name" value="Aminotrans_II_pyridoxalP_BS"/>
</dbReference>
<dbReference type="InterPro" id="IPR004839">
    <property type="entry name" value="Aminotransferase_I/II_large"/>
</dbReference>
<dbReference type="InterPro" id="IPR005861">
    <property type="entry name" value="HisP_aminotrans"/>
</dbReference>
<dbReference type="InterPro" id="IPR015424">
    <property type="entry name" value="PyrdxlP-dep_Trfase"/>
</dbReference>
<dbReference type="InterPro" id="IPR015421">
    <property type="entry name" value="PyrdxlP-dep_Trfase_major"/>
</dbReference>
<dbReference type="InterPro" id="IPR015422">
    <property type="entry name" value="PyrdxlP-dep_Trfase_small"/>
</dbReference>
<dbReference type="NCBIfam" id="TIGR01141">
    <property type="entry name" value="hisC"/>
    <property type="match status" value="1"/>
</dbReference>
<dbReference type="NCBIfam" id="NF002877">
    <property type="entry name" value="PRK03317.1"/>
    <property type="match status" value="1"/>
</dbReference>
<dbReference type="PANTHER" id="PTHR42885:SF2">
    <property type="entry name" value="HISTIDINOL-PHOSPHATE AMINOTRANSFERASE"/>
    <property type="match status" value="1"/>
</dbReference>
<dbReference type="PANTHER" id="PTHR42885">
    <property type="entry name" value="HISTIDINOL-PHOSPHATE AMINOTRANSFERASE-RELATED"/>
    <property type="match status" value="1"/>
</dbReference>
<dbReference type="Pfam" id="PF00155">
    <property type="entry name" value="Aminotran_1_2"/>
    <property type="match status" value="1"/>
</dbReference>
<dbReference type="SUPFAM" id="SSF53383">
    <property type="entry name" value="PLP-dependent transferases"/>
    <property type="match status" value="1"/>
</dbReference>
<dbReference type="PROSITE" id="PS00599">
    <property type="entry name" value="AA_TRANSFER_CLASS_2"/>
    <property type="match status" value="1"/>
</dbReference>
<name>HIS8_MYCTA</name>
<gene>
    <name evidence="1" type="primary">hisC</name>
    <name type="ordered locus">MRA_1610</name>
</gene>
<sequence>MTRSGHPVTLDDLPLRADLRGKAPYGAPQLAVPVRLNTNENPHPPTRALVDDVVRSVREAAIDLHRYPDRDAVALRADLAGYLTAQTGIQLGVENIWAANGSNEILQQLLQAFGGPGRSAIGFVPSYSMHPIISDGTHTEWIEASRANDFGLDVDVAVAAVVDRKPDVVFIASPNNPSGQSVSLPDLCKLLDVAPGIAIVDEAYGEFSSQPSAVSLVEEYPSKLVVTRTMSKAFAFAGGRLGYLIATPAVIDAMLLVRLPYHLSSVTQAAARAALRHSDDTLSSVAALIAERERVTTSLNDMGFRVIPSDANFVLFGEFADAPAAWRRYLEAGILIRDVGIPGYLRATTGLAEENDAFLRASARIATDLVPVTRSPVGAP</sequence>
<feature type="chain" id="PRO_1000063485" description="Histidinol-phosphate aminotransferase">
    <location>
        <begin position="1"/>
        <end position="380"/>
    </location>
</feature>
<feature type="modified residue" description="N6-(pyridoxal phosphate)lysine" evidence="1">
    <location>
        <position position="232"/>
    </location>
</feature>
<keyword id="KW-0028">Amino-acid biosynthesis</keyword>
<keyword id="KW-0032">Aminotransferase</keyword>
<keyword id="KW-0368">Histidine biosynthesis</keyword>
<keyword id="KW-0663">Pyridoxal phosphate</keyword>
<keyword id="KW-1185">Reference proteome</keyword>
<keyword id="KW-0808">Transferase</keyword>
<comment type="catalytic activity">
    <reaction evidence="1">
        <text>L-histidinol phosphate + 2-oxoglutarate = 3-(imidazol-4-yl)-2-oxopropyl phosphate + L-glutamate</text>
        <dbReference type="Rhea" id="RHEA:23744"/>
        <dbReference type="ChEBI" id="CHEBI:16810"/>
        <dbReference type="ChEBI" id="CHEBI:29985"/>
        <dbReference type="ChEBI" id="CHEBI:57766"/>
        <dbReference type="ChEBI" id="CHEBI:57980"/>
        <dbReference type="EC" id="2.6.1.9"/>
    </reaction>
</comment>
<comment type="cofactor">
    <cofactor evidence="1">
        <name>pyridoxal 5'-phosphate</name>
        <dbReference type="ChEBI" id="CHEBI:597326"/>
    </cofactor>
</comment>
<comment type="pathway">
    <text evidence="1">Amino-acid biosynthesis; L-histidine biosynthesis; L-histidine from 5-phospho-alpha-D-ribose 1-diphosphate: step 7/9.</text>
</comment>
<comment type="subunit">
    <text evidence="1">Homodimer.</text>
</comment>
<comment type="similarity">
    <text evidence="1">Belongs to the class-II pyridoxal-phosphate-dependent aminotransferase family. Histidinol-phosphate aminotransferase subfamily.</text>
</comment>